<name>RS14_BACLD</name>
<sequence>MAKKSKIAKEKKRQKLVEQYAELRKELKEKGDYRALSKLPRDSAPARLHNRCEVTGRPRGYMRKFKMSRIAFRELAYKGQIPGVKKSSW</sequence>
<feature type="chain" id="PRO_0000269042" description="Small ribosomal subunit protein uS14A">
    <location>
        <begin position="1"/>
        <end position="89"/>
    </location>
</feature>
<gene>
    <name evidence="1" type="primary">rpsN</name>
    <name type="synonym">rpsN2</name>
    <name type="synonym">rpsNB</name>
    <name type="ordered locus">BLi00952</name>
    <name type="ordered locus">BL03197</name>
</gene>
<keyword id="KW-1185">Reference proteome</keyword>
<keyword id="KW-0687">Ribonucleoprotein</keyword>
<keyword id="KW-0689">Ribosomal protein</keyword>
<keyword id="KW-0694">RNA-binding</keyword>
<keyword id="KW-0699">rRNA-binding</keyword>
<dbReference type="EMBL" id="AE017333">
    <property type="protein sequence ID" value="AAU39861.1"/>
    <property type="molecule type" value="Genomic_DNA"/>
</dbReference>
<dbReference type="EMBL" id="CP000002">
    <property type="protein sequence ID" value="AAU22517.1"/>
    <property type="molecule type" value="Genomic_DNA"/>
</dbReference>
<dbReference type="RefSeq" id="WP_003180010.1">
    <property type="nucleotide sequence ID" value="NC_006322.1"/>
</dbReference>
<dbReference type="SMR" id="Q65M53"/>
<dbReference type="STRING" id="279010.BL03197"/>
<dbReference type="GeneID" id="92862471"/>
<dbReference type="KEGG" id="bld:BLi00952"/>
<dbReference type="KEGG" id="bli:BL03197"/>
<dbReference type="eggNOG" id="COG0199">
    <property type="taxonomic scope" value="Bacteria"/>
</dbReference>
<dbReference type="HOGENOM" id="CLU_139869_0_0_9"/>
<dbReference type="Proteomes" id="UP000000606">
    <property type="component" value="Chromosome"/>
</dbReference>
<dbReference type="GO" id="GO:0005737">
    <property type="term" value="C:cytoplasm"/>
    <property type="evidence" value="ECO:0007669"/>
    <property type="project" value="UniProtKB-ARBA"/>
</dbReference>
<dbReference type="GO" id="GO:0015935">
    <property type="term" value="C:small ribosomal subunit"/>
    <property type="evidence" value="ECO:0007669"/>
    <property type="project" value="TreeGrafter"/>
</dbReference>
<dbReference type="GO" id="GO:0019843">
    <property type="term" value="F:rRNA binding"/>
    <property type="evidence" value="ECO:0007669"/>
    <property type="project" value="UniProtKB-UniRule"/>
</dbReference>
<dbReference type="GO" id="GO:0003735">
    <property type="term" value="F:structural constituent of ribosome"/>
    <property type="evidence" value="ECO:0007669"/>
    <property type="project" value="InterPro"/>
</dbReference>
<dbReference type="GO" id="GO:0006412">
    <property type="term" value="P:translation"/>
    <property type="evidence" value="ECO:0007669"/>
    <property type="project" value="UniProtKB-UniRule"/>
</dbReference>
<dbReference type="FunFam" id="4.10.830.10:FF:000003">
    <property type="entry name" value="30S ribosomal protein S14"/>
    <property type="match status" value="1"/>
</dbReference>
<dbReference type="Gene3D" id="4.10.830.10">
    <property type="entry name" value="30s Ribosomal Protein S14, Chain N"/>
    <property type="match status" value="1"/>
</dbReference>
<dbReference type="HAMAP" id="MF_00537">
    <property type="entry name" value="Ribosomal_uS14_1"/>
    <property type="match status" value="1"/>
</dbReference>
<dbReference type="InterPro" id="IPR001209">
    <property type="entry name" value="Ribosomal_uS14"/>
</dbReference>
<dbReference type="InterPro" id="IPR023036">
    <property type="entry name" value="Ribosomal_uS14_bac/plastid"/>
</dbReference>
<dbReference type="InterPro" id="IPR018271">
    <property type="entry name" value="Ribosomal_uS14_CS"/>
</dbReference>
<dbReference type="InterPro" id="IPR043140">
    <property type="entry name" value="Ribosomal_uS14_sf"/>
</dbReference>
<dbReference type="NCBIfam" id="NF006477">
    <property type="entry name" value="PRK08881.1"/>
    <property type="match status" value="1"/>
</dbReference>
<dbReference type="PANTHER" id="PTHR19836">
    <property type="entry name" value="30S RIBOSOMAL PROTEIN S14"/>
    <property type="match status" value="1"/>
</dbReference>
<dbReference type="PANTHER" id="PTHR19836:SF19">
    <property type="entry name" value="SMALL RIBOSOMAL SUBUNIT PROTEIN US14M"/>
    <property type="match status" value="1"/>
</dbReference>
<dbReference type="Pfam" id="PF00253">
    <property type="entry name" value="Ribosomal_S14"/>
    <property type="match status" value="1"/>
</dbReference>
<dbReference type="SUPFAM" id="SSF57716">
    <property type="entry name" value="Glucocorticoid receptor-like (DNA-binding domain)"/>
    <property type="match status" value="1"/>
</dbReference>
<dbReference type="PROSITE" id="PS00527">
    <property type="entry name" value="RIBOSOMAL_S14"/>
    <property type="match status" value="1"/>
</dbReference>
<evidence type="ECO:0000255" key="1">
    <source>
        <dbReference type="HAMAP-Rule" id="MF_00537"/>
    </source>
</evidence>
<evidence type="ECO:0000305" key="2"/>
<proteinExistence type="inferred from homology"/>
<accession>Q65M53</accession>
<accession>Q62XJ1</accession>
<comment type="function">
    <text evidence="1">Binds 16S rRNA, required for the assembly of 30S particles and may also be responsible for determining the conformation of the 16S rRNA at the A site.</text>
</comment>
<comment type="subunit">
    <text evidence="1">Part of the 30S ribosomal subunit. Contacts proteins S3 and S10.</text>
</comment>
<comment type="similarity">
    <text evidence="1">Belongs to the universal ribosomal protein uS14 family.</text>
</comment>
<organism>
    <name type="scientific">Bacillus licheniformis (strain ATCC 14580 / DSM 13 / JCM 2505 / CCUG 7422 / NBRC 12200 / NCIMB 9375 / NCTC 10341 / NRRL NRS-1264 / Gibson 46)</name>
    <dbReference type="NCBI Taxonomy" id="279010"/>
    <lineage>
        <taxon>Bacteria</taxon>
        <taxon>Bacillati</taxon>
        <taxon>Bacillota</taxon>
        <taxon>Bacilli</taxon>
        <taxon>Bacillales</taxon>
        <taxon>Bacillaceae</taxon>
        <taxon>Bacillus</taxon>
    </lineage>
</organism>
<reference key="1">
    <citation type="journal article" date="2004" name="J. Mol. Microbiol. Biotechnol.">
        <title>The complete genome sequence of Bacillus licheniformis DSM13, an organism with great industrial potential.</title>
        <authorList>
            <person name="Veith B."/>
            <person name="Herzberg C."/>
            <person name="Steckel S."/>
            <person name="Feesche J."/>
            <person name="Maurer K.H."/>
            <person name="Ehrenreich P."/>
            <person name="Baeumer S."/>
            <person name="Henne A."/>
            <person name="Liesegang H."/>
            <person name="Merkl R."/>
            <person name="Ehrenreich A."/>
            <person name="Gottschalk G."/>
        </authorList>
    </citation>
    <scope>NUCLEOTIDE SEQUENCE [LARGE SCALE GENOMIC DNA]</scope>
    <source>
        <strain>ATCC 14580 / DSM 13 / JCM 2505 / CCUG 7422 / NBRC 12200 / NCIMB 9375 / NCTC 10341 / NRRL NRS-1264 / Gibson 46</strain>
    </source>
</reference>
<reference key="2">
    <citation type="journal article" date="2004" name="Genome Biol.">
        <title>Complete genome sequence of the industrial bacterium Bacillus licheniformis and comparisons with closely related Bacillus species.</title>
        <authorList>
            <person name="Rey M.W."/>
            <person name="Ramaiya P."/>
            <person name="Nelson B.A."/>
            <person name="Brody-Karpin S.D."/>
            <person name="Zaretsky E.J."/>
            <person name="Tang M."/>
            <person name="Lopez de Leon A."/>
            <person name="Xiang H."/>
            <person name="Gusti V."/>
            <person name="Clausen I.G."/>
            <person name="Olsen P.B."/>
            <person name="Rasmussen M.D."/>
            <person name="Andersen J.T."/>
            <person name="Joergensen P.L."/>
            <person name="Larsen T.S."/>
            <person name="Sorokin A."/>
            <person name="Bolotin A."/>
            <person name="Lapidus A."/>
            <person name="Galleron N."/>
            <person name="Ehrlich S.D."/>
            <person name="Berka R.M."/>
        </authorList>
    </citation>
    <scope>NUCLEOTIDE SEQUENCE [LARGE SCALE GENOMIC DNA]</scope>
    <source>
        <strain>ATCC 14580 / DSM 13 / JCM 2505 / CCUG 7422 / NBRC 12200 / NCIMB 9375 / NCTC 10341 / NRRL NRS-1264 / Gibson 46</strain>
    </source>
</reference>
<protein>
    <recommendedName>
        <fullName evidence="1">Small ribosomal subunit protein uS14A</fullName>
    </recommendedName>
    <alternativeName>
        <fullName evidence="2">30S ribosomal protein S14</fullName>
    </alternativeName>
</protein>